<gene>
    <name evidence="1" type="primary">recX</name>
    <name type="ordered locus">VCM66_0502</name>
</gene>
<organism>
    <name type="scientific">Vibrio cholerae serotype O1 (strain M66-2)</name>
    <dbReference type="NCBI Taxonomy" id="579112"/>
    <lineage>
        <taxon>Bacteria</taxon>
        <taxon>Pseudomonadati</taxon>
        <taxon>Pseudomonadota</taxon>
        <taxon>Gammaproteobacteria</taxon>
        <taxon>Vibrionales</taxon>
        <taxon>Vibrionaceae</taxon>
        <taxon>Vibrio</taxon>
    </lineage>
</organism>
<reference key="1">
    <citation type="journal article" date="2008" name="PLoS ONE">
        <title>A recalibrated molecular clock and independent origins for the cholera pandemic clones.</title>
        <authorList>
            <person name="Feng L."/>
            <person name="Reeves P.R."/>
            <person name="Lan R."/>
            <person name="Ren Y."/>
            <person name="Gao C."/>
            <person name="Zhou Z."/>
            <person name="Ren Y."/>
            <person name="Cheng J."/>
            <person name="Wang W."/>
            <person name="Wang J."/>
            <person name="Qian W."/>
            <person name="Li D."/>
            <person name="Wang L."/>
        </authorList>
    </citation>
    <scope>NUCLEOTIDE SEQUENCE [LARGE SCALE GENOMIC DNA]</scope>
    <source>
        <strain>M66-2</strain>
    </source>
</reference>
<accession>C3LS34</accession>
<feature type="chain" id="PRO_1000164032" description="Regulatory protein RecX">
    <location>
        <begin position="1"/>
        <end position="152"/>
    </location>
</feature>
<comment type="function">
    <text evidence="1">Modulates RecA activity.</text>
</comment>
<comment type="subcellular location">
    <subcellularLocation>
        <location evidence="1">Cytoplasm</location>
    </subcellularLocation>
</comment>
<comment type="similarity">
    <text evidence="1">Belongs to the RecX family.</text>
</comment>
<name>RECX_VIBCM</name>
<protein>
    <recommendedName>
        <fullName evidence="1">Regulatory protein RecX</fullName>
    </recommendedName>
</protein>
<proteinExistence type="inferred from homology"/>
<sequence length="152" mass="17816">MSFDLATCRQSALQLLSRRDHSEYELYQKLALKGHPAEVIDEVVKYVLELGYLSDARYAASQARQIVHKGYGEQRLRQQLKEKRVAEEVIEQALAEQTIDWFELAKEVAHKKFKSGISHERSQYAKQVRYLQYRGFNFEQIRYALQASESDE</sequence>
<dbReference type="EMBL" id="CP001233">
    <property type="protein sequence ID" value="ACP04827.1"/>
    <property type="molecule type" value="Genomic_DNA"/>
</dbReference>
<dbReference type="RefSeq" id="WP_000006855.1">
    <property type="nucleotide sequence ID" value="NC_012578.1"/>
</dbReference>
<dbReference type="SMR" id="C3LS34"/>
<dbReference type="KEGG" id="vcm:VCM66_0502"/>
<dbReference type="HOGENOM" id="CLU_066607_3_2_6"/>
<dbReference type="Proteomes" id="UP000001217">
    <property type="component" value="Chromosome I"/>
</dbReference>
<dbReference type="GO" id="GO:0005737">
    <property type="term" value="C:cytoplasm"/>
    <property type="evidence" value="ECO:0007669"/>
    <property type="project" value="UniProtKB-SubCell"/>
</dbReference>
<dbReference type="GO" id="GO:0006282">
    <property type="term" value="P:regulation of DNA repair"/>
    <property type="evidence" value="ECO:0007669"/>
    <property type="project" value="UniProtKB-UniRule"/>
</dbReference>
<dbReference type="FunFam" id="1.10.10.10:FF:000847">
    <property type="entry name" value="Regulatory protein RecX"/>
    <property type="match status" value="1"/>
</dbReference>
<dbReference type="Gene3D" id="1.10.10.10">
    <property type="entry name" value="Winged helix-like DNA-binding domain superfamily/Winged helix DNA-binding domain"/>
    <property type="match status" value="3"/>
</dbReference>
<dbReference type="HAMAP" id="MF_01114">
    <property type="entry name" value="RecX"/>
    <property type="match status" value="1"/>
</dbReference>
<dbReference type="InterPro" id="IPR053926">
    <property type="entry name" value="RecX_HTH_1st"/>
</dbReference>
<dbReference type="InterPro" id="IPR053924">
    <property type="entry name" value="RecX_HTH_2nd"/>
</dbReference>
<dbReference type="InterPro" id="IPR053925">
    <property type="entry name" value="RecX_HTH_3rd"/>
</dbReference>
<dbReference type="InterPro" id="IPR003783">
    <property type="entry name" value="Regulatory_RecX"/>
</dbReference>
<dbReference type="InterPro" id="IPR036388">
    <property type="entry name" value="WH-like_DNA-bd_sf"/>
</dbReference>
<dbReference type="NCBIfam" id="NF001057">
    <property type="entry name" value="PRK00117.3-3"/>
    <property type="match status" value="1"/>
</dbReference>
<dbReference type="PANTHER" id="PTHR33602">
    <property type="entry name" value="REGULATORY PROTEIN RECX FAMILY PROTEIN"/>
    <property type="match status" value="1"/>
</dbReference>
<dbReference type="PANTHER" id="PTHR33602:SF1">
    <property type="entry name" value="REGULATORY PROTEIN RECX FAMILY PROTEIN"/>
    <property type="match status" value="1"/>
</dbReference>
<dbReference type="Pfam" id="PF21982">
    <property type="entry name" value="RecX_HTH1"/>
    <property type="match status" value="1"/>
</dbReference>
<dbReference type="Pfam" id="PF02631">
    <property type="entry name" value="RecX_HTH2"/>
    <property type="match status" value="1"/>
</dbReference>
<dbReference type="Pfam" id="PF21981">
    <property type="entry name" value="RecX_HTH3"/>
    <property type="match status" value="1"/>
</dbReference>
<keyword id="KW-0963">Cytoplasm</keyword>
<evidence type="ECO:0000255" key="1">
    <source>
        <dbReference type="HAMAP-Rule" id="MF_01114"/>
    </source>
</evidence>